<protein>
    <recommendedName>
        <fullName>Elongation factor 1-alpha 1</fullName>
        <shortName>EF-1-alpha-1</shortName>
        <ecNumber evidence="3">3.6.5.-</ecNumber>
    </recommendedName>
    <alternativeName>
        <fullName>Elongation factor Tu</fullName>
        <shortName>EF-Tu</shortName>
    </alternativeName>
    <alternativeName>
        <fullName>Eukaryotic elongation factor 1 A-1</fullName>
        <shortName>eEF1A-1</shortName>
    </alternativeName>
</protein>
<comment type="function">
    <text evidence="3 4">Translation elongation factor that catalyzes the GTP-dependent binding of aminoacyl-tRNA (aa-tRNA) to the A-site of ribosomes during the elongation phase of protein synthesis. Base pairing between the mRNA codon and the aa-tRNA anticodon promotes GTP hydrolysis, releasing the aa-tRNA from EEF1A1 and allowing its accommodation into the ribosome. The growing protein chain is subsequently transferred from the P-site peptidyl tRNA to the A-site aa-tRNA, extending it by one amino acid through ribosome-catalyzed peptide bond formation. Also plays a role in the positive regulation of IFNG transcription in T-helper 1 cells as part of an IFNG promoter-binding complex with TXK and PARP1 (By similarity). Also plays a role in cytoskeleton organization by promoting actin bundling (By similarity).</text>
</comment>
<comment type="catalytic activity">
    <reaction evidence="3">
        <text>GTP + H2O = GDP + phosphate + H(+)</text>
        <dbReference type="Rhea" id="RHEA:19669"/>
        <dbReference type="ChEBI" id="CHEBI:15377"/>
        <dbReference type="ChEBI" id="CHEBI:15378"/>
        <dbReference type="ChEBI" id="CHEBI:37565"/>
        <dbReference type="ChEBI" id="CHEBI:43474"/>
        <dbReference type="ChEBI" id="CHEBI:58189"/>
    </reaction>
    <physiologicalReaction direction="left-to-right" evidence="3">
        <dbReference type="Rhea" id="RHEA:19670"/>
    </physiologicalReaction>
</comment>
<comment type="subunit">
    <text evidence="2 3">Found in a nuclear export complex with XPO5, EEF1A1, Ran and aminoacylated tRNA. Interacts with PARP1 and TXK. Interacts with KARS1. May interact with ERGIC2. Interacts with IFIT1 (via TPR repeats 4-7) (By similarity). Interacts with DLC1, facilitating distribution to the membrane periphery and ruffles upon growth factor stimulation. Interacts with ZPR1; the interaction occurs in a epidermal growth factor (EGF)-dependent manner (By similarity). Interacts with PPP1R16B (By similarity). Interacts with SPHK1 and SPHK2; both interactions increase SPHK1 and SPHK2 kinase activity (By similarity). Interacts with guanyl-nucleotide exchange factor EEF1B2 (By similarity). Interacts (via middle-region) with HTATIP2 (via N-terminus); the interaction is direct and competes with EEF1A1 binding to guanyl-nucleotide exchange factor EEF1B2, thereby inhibiting GDP for GTP exchange and reactivation of EEF1A1 (By similarity). Interacts with tRNA (By similarity).</text>
</comment>
<comment type="subcellular location">
    <subcellularLocation>
        <location evidence="3">Cytoplasm</location>
    </subcellularLocation>
    <subcellularLocation>
        <location evidence="3">Nucleus</location>
    </subcellularLocation>
    <subcellularLocation>
        <location evidence="3">Nucleus</location>
        <location evidence="3">Nucleolus</location>
    </subcellularLocation>
    <subcellularLocation>
        <location evidence="3">Cell membrane</location>
    </subcellularLocation>
    <text evidence="3">Colocalizes with DLC1 at actin-rich regions in the cell periphery. Translocates together with ZPR1 from the cytoplasm to the nucleus and nucleolus after treatment with mitogens. Localization at the cell membrane depends on EEF1A1 phosphorylation status and the presence of PPP1R16B.</text>
</comment>
<comment type="PTM">
    <text evidence="3">ISGylated.</text>
</comment>
<comment type="PTM">
    <text evidence="3">Phosphorylated by TXK. Phosphorylation by PASK increases translation efficiency. Phosphorylated by ROCK2. Phosphorylation by TGFBR1 inhibits translation elongation.</text>
</comment>
<comment type="PTM">
    <text evidence="3">Trimethylated at Lys-79 by EEF1AKMT1. Methylated at Lys-165 by EEF1AKMT3, methylation by EEF1AKMT3 is dynamic as well as inducible by stress conditions, such as ER-stress, and plays a regulatory role on mRNA translation. Trimethylated at Lys-318 by EEF1AKMT2. Mono-, di-, and trimethylated at Lys-36 by EEF1AKMT4; trimethylated form is predominant. Methylation by EEF1AKMT4 contributes to the fine-tuning of translation rates for a subset of tRNAs. Trimethylated at Gly-2 by METTL13. Mono- and dimethylated at Lys-55 by METTL13; dimethylated form is predominant.</text>
</comment>
<comment type="PTM">
    <text evidence="3">Ubiquitinated at Lys-385 by RNF14 in response to ribosome collisions (ribosome stalling), leading to its degradation by the proteasome and rescue of stalled ribosomes.</text>
</comment>
<comment type="similarity">
    <text evidence="6">Belongs to the TRAFAC class translation factor GTPase superfamily. Classic translation factor GTPase family. EF-Tu/EF-1A subfamily.</text>
</comment>
<dbReference type="EC" id="3.6.5.-" evidence="3"/>
<dbReference type="EMBL" id="D00522">
    <property type="protein sequence ID" value="BAA00409.1"/>
    <property type="molecule type" value="mRNA"/>
</dbReference>
<dbReference type="PIR" id="JU0133">
    <property type="entry name" value="JU0133"/>
</dbReference>
<dbReference type="RefSeq" id="NP_001231331.1">
    <property type="nucleotide sequence ID" value="NM_001244402.1"/>
</dbReference>
<dbReference type="SMR" id="P62629"/>
<dbReference type="PaxDb" id="10029-NP_001231331.1"/>
<dbReference type="Ensembl" id="ENSCGRT00001000541.1">
    <property type="protein sequence ID" value="ENSCGRP00001000517.1"/>
    <property type="gene ID" value="ENSCGRG00001000419.1"/>
</dbReference>
<dbReference type="GeneID" id="100689276"/>
<dbReference type="KEGG" id="cge:100689276"/>
<dbReference type="CTD" id="1915"/>
<dbReference type="eggNOG" id="KOG0052">
    <property type="taxonomic scope" value="Eukaryota"/>
</dbReference>
<dbReference type="GeneTree" id="ENSGT00950000183029"/>
<dbReference type="OrthoDB" id="342024at2759"/>
<dbReference type="Proteomes" id="UP000694386">
    <property type="component" value="Unplaced"/>
</dbReference>
<dbReference type="Proteomes" id="UP001108280">
    <property type="component" value="Chromosome 4"/>
</dbReference>
<dbReference type="GO" id="GO:0005737">
    <property type="term" value="C:cytoplasm"/>
    <property type="evidence" value="ECO:0000314"/>
    <property type="project" value="UniProtKB"/>
</dbReference>
<dbReference type="GO" id="GO:0005730">
    <property type="term" value="C:nucleolus"/>
    <property type="evidence" value="ECO:0000250"/>
    <property type="project" value="UniProtKB"/>
</dbReference>
<dbReference type="GO" id="GO:0005634">
    <property type="term" value="C:nucleus"/>
    <property type="evidence" value="ECO:0000250"/>
    <property type="project" value="UniProtKB"/>
</dbReference>
<dbReference type="GO" id="GO:0005886">
    <property type="term" value="C:plasma membrane"/>
    <property type="evidence" value="ECO:0000250"/>
    <property type="project" value="UniProtKB"/>
</dbReference>
<dbReference type="GO" id="GO:0005516">
    <property type="term" value="F:calmodulin binding"/>
    <property type="evidence" value="ECO:0007669"/>
    <property type="project" value="Ensembl"/>
</dbReference>
<dbReference type="GO" id="GO:0005525">
    <property type="term" value="F:GTP binding"/>
    <property type="evidence" value="ECO:0007669"/>
    <property type="project" value="UniProtKB-KW"/>
</dbReference>
<dbReference type="GO" id="GO:0003924">
    <property type="term" value="F:GTPase activity"/>
    <property type="evidence" value="ECO:0000250"/>
    <property type="project" value="UniProtKB"/>
</dbReference>
<dbReference type="GO" id="GO:0019209">
    <property type="term" value="F:kinase activator activity"/>
    <property type="evidence" value="ECO:0000250"/>
    <property type="project" value="UniProtKB"/>
</dbReference>
<dbReference type="GO" id="GO:0003746">
    <property type="term" value="F:translation elongation factor activity"/>
    <property type="evidence" value="ECO:0000250"/>
    <property type="project" value="UniProtKB"/>
</dbReference>
<dbReference type="GO" id="GO:0071364">
    <property type="term" value="P:cellular response to epidermal growth factor stimulus"/>
    <property type="evidence" value="ECO:0000250"/>
    <property type="project" value="UniProtKB"/>
</dbReference>
<dbReference type="GO" id="GO:0006414">
    <property type="term" value="P:translational elongation"/>
    <property type="evidence" value="ECO:0000250"/>
    <property type="project" value="UniProtKB"/>
</dbReference>
<dbReference type="CDD" id="cd01883">
    <property type="entry name" value="EF1_alpha"/>
    <property type="match status" value="1"/>
</dbReference>
<dbReference type="CDD" id="cd03693">
    <property type="entry name" value="EF1_alpha_II"/>
    <property type="match status" value="1"/>
</dbReference>
<dbReference type="CDD" id="cd03705">
    <property type="entry name" value="EF1_alpha_III"/>
    <property type="match status" value="1"/>
</dbReference>
<dbReference type="FunFam" id="2.40.30.10:FF:000005">
    <property type="entry name" value="Elongation factor 1-alpha"/>
    <property type="match status" value="1"/>
</dbReference>
<dbReference type="FunFam" id="3.40.50.300:FF:000090">
    <property type="entry name" value="Elongation factor 1-alpha"/>
    <property type="match status" value="1"/>
</dbReference>
<dbReference type="FunFam" id="2.40.30.10:FF:000168">
    <property type="entry name" value="Elongation factor 1-alpha 2"/>
    <property type="match status" value="1"/>
</dbReference>
<dbReference type="Gene3D" id="3.40.50.300">
    <property type="entry name" value="P-loop containing nucleotide triphosphate hydrolases"/>
    <property type="match status" value="1"/>
</dbReference>
<dbReference type="Gene3D" id="2.40.30.10">
    <property type="entry name" value="Translation factors"/>
    <property type="match status" value="2"/>
</dbReference>
<dbReference type="HAMAP" id="MF_00118_A">
    <property type="entry name" value="EF_Tu_A"/>
    <property type="match status" value="1"/>
</dbReference>
<dbReference type="InterPro" id="IPR004161">
    <property type="entry name" value="EFTu-like_2"/>
</dbReference>
<dbReference type="InterPro" id="IPR031157">
    <property type="entry name" value="G_TR_CS"/>
</dbReference>
<dbReference type="InterPro" id="IPR054696">
    <property type="entry name" value="GTP-eEF1A_C"/>
</dbReference>
<dbReference type="InterPro" id="IPR027417">
    <property type="entry name" value="P-loop_NTPase"/>
</dbReference>
<dbReference type="InterPro" id="IPR000795">
    <property type="entry name" value="T_Tr_GTP-bd_dom"/>
</dbReference>
<dbReference type="InterPro" id="IPR050100">
    <property type="entry name" value="TRAFAC_GTPase_members"/>
</dbReference>
<dbReference type="InterPro" id="IPR009000">
    <property type="entry name" value="Transl_B-barrel_sf"/>
</dbReference>
<dbReference type="InterPro" id="IPR009001">
    <property type="entry name" value="Transl_elong_EF1A/Init_IF2_C"/>
</dbReference>
<dbReference type="InterPro" id="IPR004539">
    <property type="entry name" value="Transl_elong_EF1A_euk/arc"/>
</dbReference>
<dbReference type="NCBIfam" id="TIGR00483">
    <property type="entry name" value="EF-1_alpha"/>
    <property type="match status" value="1"/>
</dbReference>
<dbReference type="NCBIfam" id="NF008969">
    <property type="entry name" value="PRK12317.1"/>
    <property type="match status" value="1"/>
</dbReference>
<dbReference type="PANTHER" id="PTHR23115">
    <property type="entry name" value="TRANSLATION FACTOR"/>
    <property type="match status" value="1"/>
</dbReference>
<dbReference type="Pfam" id="PF22594">
    <property type="entry name" value="GTP-eEF1A_C"/>
    <property type="match status" value="1"/>
</dbReference>
<dbReference type="Pfam" id="PF00009">
    <property type="entry name" value="GTP_EFTU"/>
    <property type="match status" value="1"/>
</dbReference>
<dbReference type="Pfam" id="PF03144">
    <property type="entry name" value="GTP_EFTU_D2"/>
    <property type="match status" value="1"/>
</dbReference>
<dbReference type="PRINTS" id="PR00315">
    <property type="entry name" value="ELONGATNFCT"/>
</dbReference>
<dbReference type="SUPFAM" id="SSF50465">
    <property type="entry name" value="EF-Tu/eEF-1alpha/eIF2-gamma C-terminal domain"/>
    <property type="match status" value="1"/>
</dbReference>
<dbReference type="SUPFAM" id="SSF52540">
    <property type="entry name" value="P-loop containing nucleoside triphosphate hydrolases"/>
    <property type="match status" value="1"/>
</dbReference>
<dbReference type="SUPFAM" id="SSF50447">
    <property type="entry name" value="Translation proteins"/>
    <property type="match status" value="1"/>
</dbReference>
<dbReference type="PROSITE" id="PS00301">
    <property type="entry name" value="G_TR_1"/>
    <property type="match status" value="1"/>
</dbReference>
<dbReference type="PROSITE" id="PS51722">
    <property type="entry name" value="G_TR_2"/>
    <property type="match status" value="1"/>
</dbReference>
<reference key="1">
    <citation type="journal article" date="1989" name="J. Biochem.">
        <title>Anchoring of peptide elongation factor EF-1 alpha by phosphatidylinositol at the endoplasmic reticulum membrane.</title>
        <authorList>
            <person name="Hayashi Y."/>
            <person name="Urade R."/>
            <person name="Utsumi S."/>
            <person name="Kito M."/>
        </authorList>
    </citation>
    <scope>NUCLEOTIDE SEQUENCE [MRNA]</scope>
    <source>
        <tissue>Lung fibroblast</tissue>
    </source>
</reference>
<keyword id="KW-0007">Acetylation</keyword>
<keyword id="KW-1003">Cell membrane</keyword>
<keyword id="KW-0963">Cytoplasm</keyword>
<keyword id="KW-0251">Elongation factor</keyword>
<keyword id="KW-0342">GTP-binding</keyword>
<keyword id="KW-0378">Hydrolase</keyword>
<keyword id="KW-1017">Isopeptide bond</keyword>
<keyword id="KW-0472">Membrane</keyword>
<keyword id="KW-0488">Methylation</keyword>
<keyword id="KW-0547">Nucleotide-binding</keyword>
<keyword id="KW-0539">Nucleus</keyword>
<keyword id="KW-0597">Phosphoprotein</keyword>
<keyword id="KW-0648">Protein biosynthesis</keyword>
<keyword id="KW-0832">Ubl conjugation</keyword>
<accession>P62629</accession>
<accession>P20001</accession>
<name>EF1A1_CRIGR</name>
<evidence type="ECO:0000250" key="1">
    <source>
        <dbReference type="UniProtKB" id="P10126"/>
    </source>
</evidence>
<evidence type="ECO:0000250" key="2">
    <source>
        <dbReference type="UniProtKB" id="P62630"/>
    </source>
</evidence>
<evidence type="ECO:0000250" key="3">
    <source>
        <dbReference type="UniProtKB" id="P68104"/>
    </source>
</evidence>
<evidence type="ECO:0000250" key="4">
    <source>
        <dbReference type="UniProtKB" id="P68105"/>
    </source>
</evidence>
<evidence type="ECO:0000255" key="5"/>
<evidence type="ECO:0000305" key="6"/>
<sequence>MGKEKTHINIVVIGHVDSGKSTTTGHLIYKCGGIDKRTIEKFEKEAAEMGKGSFKYAWVLDKLKAERERGITIDISLWKFETSKYYVTIIDAPGHRDFIKNMITGTSQADCAVLIVAAGVGEFEAGISKNGQTREHALLAYTLGVKQLIVGVNKMDSTEPPYSQKRYEEIVKEVSTYIKKIGYNPDTVAFVPISGWNGDNMLEPSANMPWFKGWKVTRKDGSASGTTLLEALDCILPPTRPTDKPLRLPLQDVYKIGGIGTVPVGRVETGVLKPGMVVTFAPVNVTTEVKSVEMHHEALSEALPGDNVGFNVKNVSVKDVRRGNVAGDSKNDPPMEAAGFTAQVIILNHPGQISAGYAPVLDCHTAHIACKFAELKEKIDRRSGKKLEDGPKFLKSGDAAIVDMVPGKPMCVESFSDYPPLGRFAVRDMRQTVAVGVIKAVDKKAAGAGKVTKSAQKAQKAK</sequence>
<organism>
    <name type="scientific">Cricetulus griseus</name>
    <name type="common">Chinese hamster</name>
    <name type="synonym">Cricetulus barabensis griseus</name>
    <dbReference type="NCBI Taxonomy" id="10029"/>
    <lineage>
        <taxon>Eukaryota</taxon>
        <taxon>Metazoa</taxon>
        <taxon>Chordata</taxon>
        <taxon>Craniata</taxon>
        <taxon>Vertebrata</taxon>
        <taxon>Euteleostomi</taxon>
        <taxon>Mammalia</taxon>
        <taxon>Eutheria</taxon>
        <taxon>Euarchontoglires</taxon>
        <taxon>Glires</taxon>
        <taxon>Rodentia</taxon>
        <taxon>Myomorpha</taxon>
        <taxon>Muroidea</taxon>
        <taxon>Cricetidae</taxon>
        <taxon>Cricetinae</taxon>
        <taxon>Cricetulus</taxon>
    </lineage>
</organism>
<gene>
    <name type="primary">EEF1A1</name>
    <name type="synonym">EEF1A</name>
</gene>
<proteinExistence type="evidence at transcript level"/>
<feature type="initiator methionine" description="Removed" evidence="3">
    <location>
        <position position="1"/>
    </location>
</feature>
<feature type="chain" id="PRO_0000090883" description="Elongation factor 1-alpha 1">
    <location>
        <begin position="2"/>
        <end position="462"/>
    </location>
</feature>
<feature type="domain" description="tr-type G">
    <location>
        <begin position="5"/>
        <end position="242"/>
    </location>
</feature>
<feature type="region of interest" description="G1" evidence="5">
    <location>
        <begin position="14"/>
        <end position="21"/>
    </location>
</feature>
<feature type="region of interest" description="G2" evidence="5">
    <location>
        <begin position="70"/>
        <end position="74"/>
    </location>
</feature>
<feature type="region of interest" description="G3" evidence="5">
    <location>
        <begin position="91"/>
        <end position="94"/>
    </location>
</feature>
<feature type="region of interest" description="G4" evidence="5">
    <location>
        <begin position="153"/>
        <end position="156"/>
    </location>
</feature>
<feature type="region of interest" description="G5" evidence="5">
    <location>
        <begin position="194"/>
        <end position="196"/>
    </location>
</feature>
<feature type="binding site" evidence="4">
    <location>
        <begin position="14"/>
        <end position="21"/>
    </location>
    <ligand>
        <name>GTP</name>
        <dbReference type="ChEBI" id="CHEBI:37565"/>
    </ligand>
</feature>
<feature type="binding site" evidence="4">
    <location>
        <begin position="153"/>
        <end position="156"/>
    </location>
    <ligand>
        <name>GTP</name>
        <dbReference type="ChEBI" id="CHEBI:37565"/>
    </ligand>
</feature>
<feature type="binding site" evidence="4">
    <location>
        <begin position="194"/>
        <end position="196"/>
    </location>
    <ligand>
        <name>GTP</name>
        <dbReference type="ChEBI" id="CHEBI:37565"/>
    </ligand>
</feature>
<feature type="modified residue" description="N,N,N-trimethylglycine" evidence="3">
    <location>
        <position position="2"/>
    </location>
</feature>
<feature type="modified residue" description="N6,N6,N6-trimethyllysine; alternate" evidence="3">
    <location>
        <position position="36"/>
    </location>
</feature>
<feature type="modified residue" description="N6,N6-dimethyllysine; alternate" evidence="3">
    <location>
        <position position="36"/>
    </location>
</feature>
<feature type="modified residue" description="N6-methyllysine; alternate" evidence="3">
    <location>
        <position position="36"/>
    </location>
</feature>
<feature type="modified residue" description="N6,N6-dimethyllysine" evidence="3">
    <location>
        <position position="55"/>
    </location>
</feature>
<feature type="modified residue" description="N6,N6,N6-trimethyllysine; by EEF1AKMT1" evidence="3">
    <location>
        <position position="79"/>
    </location>
</feature>
<feature type="modified residue" description="N6,N6,N6-trimethyllysine; alternate; by EEF1AKMT3" evidence="3">
    <location>
        <position position="165"/>
    </location>
</feature>
<feature type="modified residue" description="N6,N6-dimethyllysine; alternate; by EEF1AKMT3" evidence="3">
    <location>
        <position position="165"/>
    </location>
</feature>
<feature type="modified residue" description="N6-acetyllysine; alternate" evidence="1">
    <location>
        <position position="165"/>
    </location>
</feature>
<feature type="modified residue" description="N6-methyllysine; alternate; by EEF1AKMT3" evidence="3">
    <location>
        <position position="165"/>
    </location>
</feature>
<feature type="modified residue" description="N6-acetyllysine" evidence="1">
    <location>
        <position position="172"/>
    </location>
</feature>
<feature type="modified residue" description="N6-acetyllysine" evidence="1">
    <location>
        <position position="273"/>
    </location>
</feature>
<feature type="modified residue" description="Phosphoserine; by TGFBR1" evidence="3">
    <location>
        <position position="300"/>
    </location>
</feature>
<feature type="modified residue" description="5-glutamyl glycerylphosphorylethanolamine" evidence="3">
    <location>
        <position position="301"/>
    </location>
</feature>
<feature type="modified residue" description="N6,N6,N6-trimethyllysine; by EEF1AKMT2" evidence="3">
    <location>
        <position position="318"/>
    </location>
</feature>
<feature type="modified residue" description="5-glutamyl glycerylphosphorylethanolamine" evidence="3">
    <location>
        <position position="374"/>
    </location>
</feature>
<feature type="modified residue" description="N6-acetyllysine; alternate" evidence="1">
    <location>
        <position position="392"/>
    </location>
</feature>
<feature type="modified residue" description="N6-succinyllysine; alternate" evidence="1">
    <location>
        <position position="392"/>
    </location>
</feature>
<feature type="modified residue" description="Phosphothreonine; by PASK" evidence="3">
    <location>
        <position position="432"/>
    </location>
</feature>
<feature type="modified residue" description="N6-acetyllysine" evidence="1">
    <location>
        <position position="439"/>
    </location>
</feature>
<feature type="cross-link" description="Glycyl lysine isopeptide (Lys-Gly) (interchain with G-Cter in ubiquitin)" evidence="3">
    <location>
        <position position="385"/>
    </location>
</feature>